<dbReference type="EC" id="2.7.7.-" evidence="1"/>
<dbReference type="EC" id="2.7.7.108" evidence="1"/>
<dbReference type="EMBL" id="BA000040">
    <property type="protein sequence ID" value="BAC49407.1"/>
    <property type="molecule type" value="Genomic_DNA"/>
</dbReference>
<dbReference type="RefSeq" id="NP_770782.1">
    <property type="nucleotide sequence ID" value="NC_004463.1"/>
</dbReference>
<dbReference type="RefSeq" id="WP_011086915.1">
    <property type="nucleotide sequence ID" value="NC_004463.1"/>
</dbReference>
<dbReference type="SMR" id="Q89MQ0"/>
<dbReference type="FunCoup" id="Q89MQ0">
    <property type="interactions" value="544"/>
</dbReference>
<dbReference type="STRING" id="224911.AAV28_17745"/>
<dbReference type="EnsemblBacteria" id="BAC49407">
    <property type="protein sequence ID" value="BAC49407"/>
    <property type="gene ID" value="BAC49407"/>
</dbReference>
<dbReference type="GeneID" id="46491142"/>
<dbReference type="KEGG" id="bja:bll4142"/>
<dbReference type="PATRIC" id="fig|224911.44.peg.3856"/>
<dbReference type="eggNOG" id="COG0397">
    <property type="taxonomic scope" value="Bacteria"/>
</dbReference>
<dbReference type="HOGENOM" id="CLU_010245_4_1_5"/>
<dbReference type="InParanoid" id="Q89MQ0"/>
<dbReference type="OrthoDB" id="9776281at2"/>
<dbReference type="PhylomeDB" id="Q89MQ0"/>
<dbReference type="Proteomes" id="UP000002526">
    <property type="component" value="Chromosome"/>
</dbReference>
<dbReference type="GO" id="GO:0070733">
    <property type="term" value="F:AMPylase activity"/>
    <property type="evidence" value="ECO:0000318"/>
    <property type="project" value="GO_Central"/>
</dbReference>
<dbReference type="GO" id="GO:0005524">
    <property type="term" value="F:ATP binding"/>
    <property type="evidence" value="ECO:0007669"/>
    <property type="project" value="UniProtKB-UniRule"/>
</dbReference>
<dbReference type="GO" id="GO:0000287">
    <property type="term" value="F:magnesium ion binding"/>
    <property type="evidence" value="ECO:0007669"/>
    <property type="project" value="UniProtKB-UniRule"/>
</dbReference>
<dbReference type="HAMAP" id="MF_00692">
    <property type="entry name" value="YdiU_SelO"/>
    <property type="match status" value="1"/>
</dbReference>
<dbReference type="InterPro" id="IPR003846">
    <property type="entry name" value="SelO"/>
</dbReference>
<dbReference type="NCBIfam" id="NF000658">
    <property type="entry name" value="PRK00029.1"/>
    <property type="match status" value="1"/>
</dbReference>
<dbReference type="PANTHER" id="PTHR32057">
    <property type="entry name" value="PROTEIN ADENYLYLTRANSFERASE SELO, MITOCHONDRIAL"/>
    <property type="match status" value="1"/>
</dbReference>
<dbReference type="PANTHER" id="PTHR32057:SF14">
    <property type="entry name" value="PROTEIN ADENYLYLTRANSFERASE SELO, MITOCHONDRIAL"/>
    <property type="match status" value="1"/>
</dbReference>
<dbReference type="Pfam" id="PF02696">
    <property type="entry name" value="SelO"/>
    <property type="match status" value="1"/>
</dbReference>
<organism>
    <name type="scientific">Bradyrhizobium diazoefficiens (strain JCM 10833 / BCRC 13528 / IAM 13628 / NBRC 14792 / USDA 110)</name>
    <dbReference type="NCBI Taxonomy" id="224911"/>
    <lineage>
        <taxon>Bacteria</taxon>
        <taxon>Pseudomonadati</taxon>
        <taxon>Pseudomonadota</taxon>
        <taxon>Alphaproteobacteria</taxon>
        <taxon>Hyphomicrobiales</taxon>
        <taxon>Nitrobacteraceae</taxon>
        <taxon>Bradyrhizobium</taxon>
    </lineage>
</organism>
<protein>
    <recommendedName>
        <fullName evidence="1">Protein nucleotidyltransferase YdiU</fullName>
        <ecNumber evidence="1">2.7.7.-</ecNumber>
    </recommendedName>
    <alternativeName>
        <fullName evidence="1">Protein adenylyltransferase YdiU</fullName>
        <ecNumber evidence="1">2.7.7.108</ecNumber>
    </alternativeName>
    <alternativeName>
        <fullName evidence="1">Protein uridylyltransferase YdiU</fullName>
        <ecNumber evidence="1">2.7.7.-</ecNumber>
    </alternativeName>
</protein>
<accession>Q89MQ0</accession>
<keyword id="KW-0067">ATP-binding</keyword>
<keyword id="KW-0460">Magnesium</keyword>
<keyword id="KW-0464">Manganese</keyword>
<keyword id="KW-0479">Metal-binding</keyword>
<keyword id="KW-0547">Nucleotide-binding</keyword>
<keyword id="KW-0548">Nucleotidyltransferase</keyword>
<keyword id="KW-1185">Reference proteome</keyword>
<keyword id="KW-0808">Transferase</keyword>
<comment type="function">
    <text evidence="1">Nucleotidyltransferase involved in the post-translational modification of proteins. It can catalyze the addition of adenosine monophosphate (AMP) or uridine monophosphate (UMP) to a protein, resulting in modifications known as AMPylation and UMPylation.</text>
</comment>
<comment type="catalytic activity">
    <reaction evidence="1">
        <text>L-seryl-[protein] + ATP = 3-O-(5'-adenylyl)-L-seryl-[protein] + diphosphate</text>
        <dbReference type="Rhea" id="RHEA:58120"/>
        <dbReference type="Rhea" id="RHEA-COMP:9863"/>
        <dbReference type="Rhea" id="RHEA-COMP:15073"/>
        <dbReference type="ChEBI" id="CHEBI:29999"/>
        <dbReference type="ChEBI" id="CHEBI:30616"/>
        <dbReference type="ChEBI" id="CHEBI:33019"/>
        <dbReference type="ChEBI" id="CHEBI:142516"/>
        <dbReference type="EC" id="2.7.7.108"/>
    </reaction>
</comment>
<comment type="catalytic activity">
    <reaction evidence="1">
        <text>L-threonyl-[protein] + ATP = 3-O-(5'-adenylyl)-L-threonyl-[protein] + diphosphate</text>
        <dbReference type="Rhea" id="RHEA:54292"/>
        <dbReference type="Rhea" id="RHEA-COMP:11060"/>
        <dbReference type="Rhea" id="RHEA-COMP:13847"/>
        <dbReference type="ChEBI" id="CHEBI:30013"/>
        <dbReference type="ChEBI" id="CHEBI:30616"/>
        <dbReference type="ChEBI" id="CHEBI:33019"/>
        <dbReference type="ChEBI" id="CHEBI:138113"/>
        <dbReference type="EC" id="2.7.7.108"/>
    </reaction>
</comment>
<comment type="catalytic activity">
    <reaction evidence="1">
        <text>L-tyrosyl-[protein] + ATP = O-(5'-adenylyl)-L-tyrosyl-[protein] + diphosphate</text>
        <dbReference type="Rhea" id="RHEA:54288"/>
        <dbReference type="Rhea" id="RHEA-COMP:10136"/>
        <dbReference type="Rhea" id="RHEA-COMP:13846"/>
        <dbReference type="ChEBI" id="CHEBI:30616"/>
        <dbReference type="ChEBI" id="CHEBI:33019"/>
        <dbReference type="ChEBI" id="CHEBI:46858"/>
        <dbReference type="ChEBI" id="CHEBI:83624"/>
        <dbReference type="EC" id="2.7.7.108"/>
    </reaction>
</comment>
<comment type="catalytic activity">
    <reaction evidence="1">
        <text>L-histidyl-[protein] + UTP = N(tele)-(5'-uridylyl)-L-histidyl-[protein] + diphosphate</text>
        <dbReference type="Rhea" id="RHEA:83891"/>
        <dbReference type="Rhea" id="RHEA-COMP:9745"/>
        <dbReference type="Rhea" id="RHEA-COMP:20239"/>
        <dbReference type="ChEBI" id="CHEBI:29979"/>
        <dbReference type="ChEBI" id="CHEBI:33019"/>
        <dbReference type="ChEBI" id="CHEBI:46398"/>
        <dbReference type="ChEBI" id="CHEBI:233474"/>
    </reaction>
</comment>
<comment type="catalytic activity">
    <reaction evidence="1">
        <text>L-seryl-[protein] + UTP = O-(5'-uridylyl)-L-seryl-[protein] + diphosphate</text>
        <dbReference type="Rhea" id="RHEA:64604"/>
        <dbReference type="Rhea" id="RHEA-COMP:9863"/>
        <dbReference type="Rhea" id="RHEA-COMP:16635"/>
        <dbReference type="ChEBI" id="CHEBI:29999"/>
        <dbReference type="ChEBI" id="CHEBI:33019"/>
        <dbReference type="ChEBI" id="CHEBI:46398"/>
        <dbReference type="ChEBI" id="CHEBI:156051"/>
    </reaction>
</comment>
<comment type="catalytic activity">
    <reaction evidence="1">
        <text>L-tyrosyl-[protein] + UTP = O-(5'-uridylyl)-L-tyrosyl-[protein] + diphosphate</text>
        <dbReference type="Rhea" id="RHEA:83887"/>
        <dbReference type="Rhea" id="RHEA-COMP:10136"/>
        <dbReference type="Rhea" id="RHEA-COMP:20238"/>
        <dbReference type="ChEBI" id="CHEBI:33019"/>
        <dbReference type="ChEBI" id="CHEBI:46398"/>
        <dbReference type="ChEBI" id="CHEBI:46858"/>
        <dbReference type="ChEBI" id="CHEBI:90602"/>
    </reaction>
</comment>
<comment type="cofactor">
    <cofactor evidence="1">
        <name>Mg(2+)</name>
        <dbReference type="ChEBI" id="CHEBI:18420"/>
    </cofactor>
    <cofactor evidence="1">
        <name>Mn(2+)</name>
        <dbReference type="ChEBI" id="CHEBI:29035"/>
    </cofactor>
</comment>
<comment type="similarity">
    <text evidence="1">Belongs to the SELO family.</text>
</comment>
<feature type="chain" id="PRO_0000121411" description="Protein nucleotidyltransferase YdiU">
    <location>
        <begin position="1"/>
        <end position="491"/>
    </location>
</feature>
<feature type="active site" description="Proton acceptor" evidence="1">
    <location>
        <position position="250"/>
    </location>
</feature>
<feature type="binding site" evidence="1">
    <location>
        <position position="88"/>
    </location>
    <ligand>
        <name>ATP</name>
        <dbReference type="ChEBI" id="CHEBI:30616"/>
    </ligand>
</feature>
<feature type="binding site" evidence="1">
    <location>
        <position position="90"/>
    </location>
    <ligand>
        <name>ATP</name>
        <dbReference type="ChEBI" id="CHEBI:30616"/>
    </ligand>
</feature>
<feature type="binding site" evidence="1">
    <location>
        <position position="91"/>
    </location>
    <ligand>
        <name>ATP</name>
        <dbReference type="ChEBI" id="CHEBI:30616"/>
    </ligand>
</feature>
<feature type="binding site" evidence="1">
    <location>
        <position position="111"/>
    </location>
    <ligand>
        <name>ATP</name>
        <dbReference type="ChEBI" id="CHEBI:30616"/>
    </ligand>
</feature>
<feature type="binding site" evidence="1">
    <location>
        <position position="123"/>
    </location>
    <ligand>
        <name>ATP</name>
        <dbReference type="ChEBI" id="CHEBI:30616"/>
    </ligand>
</feature>
<feature type="binding site" evidence="1">
    <location>
        <position position="124"/>
    </location>
    <ligand>
        <name>ATP</name>
        <dbReference type="ChEBI" id="CHEBI:30616"/>
    </ligand>
</feature>
<feature type="binding site" evidence="1">
    <location>
        <position position="174"/>
    </location>
    <ligand>
        <name>ATP</name>
        <dbReference type="ChEBI" id="CHEBI:30616"/>
    </ligand>
</feature>
<feature type="binding site" evidence="1">
    <location>
        <position position="181"/>
    </location>
    <ligand>
        <name>ATP</name>
        <dbReference type="ChEBI" id="CHEBI:30616"/>
    </ligand>
</feature>
<feature type="binding site" evidence="1">
    <location>
        <position position="251"/>
    </location>
    <ligand>
        <name>Mg(2+)</name>
        <dbReference type="ChEBI" id="CHEBI:18420"/>
    </ligand>
</feature>
<feature type="binding site" evidence="1">
    <location>
        <position position="260"/>
    </location>
    <ligand>
        <name>ATP</name>
        <dbReference type="ChEBI" id="CHEBI:30616"/>
    </ligand>
</feature>
<feature type="binding site" evidence="1">
    <location>
        <position position="260"/>
    </location>
    <ligand>
        <name>Mg(2+)</name>
        <dbReference type="ChEBI" id="CHEBI:18420"/>
    </ligand>
</feature>
<name>SELO_BRADU</name>
<proteinExistence type="inferred from homology"/>
<sequence>MTVHFPFQNSYSALPDSFFARVAPTPVAAPRLIKLNRPLAVQLGLDPNMLETPEGAEILAGKTVPDGADPIAMAYAGHQFGQFVPQLGDGRAILLGEVIDRDGVRRDIQLKGSGPTPFSRRGDGRAALGPVLREYIVSEAMYALGIPTTRSLAAVVTGEHVIRETALPGAVLTRVAASHIRVGTFQFFAVRRDTDAIRRLADHVIARHYPELLGTERPYHALLAGVVARQAELVARWLLVGFIHGVMNTDNSSISGETIDYGPCAFMDAYNPAQVFSSIDEMGRYAYANQPRIALWNLTRLAECLLPLFGEEQEKAVEQAQDILGAFPETFSKAYQAGLRKKVGLFTERDGDEALIQDLLDAMAKNQADFTLTFRRLGDAAGDPAADDARAEFMDPAAFDEWARRWRERLAAEPQSAAERQTAMNAVNPLFIPRNHRVEAVIQAAVNDDNYALFEELVKVLAKPYEDQPDYAAYADPPLPDQRVLQTFCGT</sequence>
<gene>
    <name evidence="1" type="primary">ydiU</name>
    <name evidence="1" type="synonym">selO</name>
    <name type="ordered locus">bll4142</name>
</gene>
<evidence type="ECO:0000255" key="1">
    <source>
        <dbReference type="HAMAP-Rule" id="MF_00692"/>
    </source>
</evidence>
<reference key="1">
    <citation type="journal article" date="2002" name="DNA Res.">
        <title>Complete genomic sequence of nitrogen-fixing symbiotic bacterium Bradyrhizobium japonicum USDA110.</title>
        <authorList>
            <person name="Kaneko T."/>
            <person name="Nakamura Y."/>
            <person name="Sato S."/>
            <person name="Minamisawa K."/>
            <person name="Uchiumi T."/>
            <person name="Sasamoto S."/>
            <person name="Watanabe A."/>
            <person name="Idesawa K."/>
            <person name="Iriguchi M."/>
            <person name="Kawashima K."/>
            <person name="Kohara M."/>
            <person name="Matsumoto M."/>
            <person name="Shimpo S."/>
            <person name="Tsuruoka H."/>
            <person name="Wada T."/>
            <person name="Yamada M."/>
            <person name="Tabata S."/>
        </authorList>
    </citation>
    <scope>NUCLEOTIDE SEQUENCE [LARGE SCALE GENOMIC DNA]</scope>
    <source>
        <strain>JCM 10833 / BCRC 13528 / IAM 13628 / NBRC 14792 / USDA 110</strain>
    </source>
</reference>